<comment type="function">
    <text evidence="1">Required for the formation of a threonylcarbamoyl group on adenosine at position 37 (t(6)A37) in tRNAs that read codons beginning with adenine. Is involved in the transfer of the threonylcarbamoyl moiety of threonylcarbamoyl-AMP (TC-AMP) to the N6 group of A37, together with TsaE and TsaB. TsaD likely plays a direct catalytic role in this reaction.</text>
</comment>
<comment type="catalytic activity">
    <reaction evidence="1">
        <text>L-threonylcarbamoyladenylate + adenosine(37) in tRNA = N(6)-L-threonylcarbamoyladenosine(37) in tRNA + AMP + H(+)</text>
        <dbReference type="Rhea" id="RHEA:37059"/>
        <dbReference type="Rhea" id="RHEA-COMP:10162"/>
        <dbReference type="Rhea" id="RHEA-COMP:10163"/>
        <dbReference type="ChEBI" id="CHEBI:15378"/>
        <dbReference type="ChEBI" id="CHEBI:73682"/>
        <dbReference type="ChEBI" id="CHEBI:74411"/>
        <dbReference type="ChEBI" id="CHEBI:74418"/>
        <dbReference type="ChEBI" id="CHEBI:456215"/>
        <dbReference type="EC" id="2.3.1.234"/>
    </reaction>
</comment>
<comment type="cofactor">
    <cofactor evidence="1">
        <name>Fe(2+)</name>
        <dbReference type="ChEBI" id="CHEBI:29033"/>
    </cofactor>
    <text evidence="1">Binds 1 Fe(2+) ion per subunit.</text>
</comment>
<comment type="subcellular location">
    <subcellularLocation>
        <location evidence="1">Cytoplasm</location>
    </subcellularLocation>
</comment>
<comment type="similarity">
    <text evidence="1">Belongs to the KAE1 / TsaD family.</text>
</comment>
<organism>
    <name type="scientific">Cyanothece sp. (strain PCC 7425 / ATCC 29141)</name>
    <dbReference type="NCBI Taxonomy" id="395961"/>
    <lineage>
        <taxon>Bacteria</taxon>
        <taxon>Bacillati</taxon>
        <taxon>Cyanobacteriota</taxon>
        <taxon>Cyanophyceae</taxon>
        <taxon>Gomontiellales</taxon>
        <taxon>Cyanothecaceae</taxon>
        <taxon>Cyanothece</taxon>
    </lineage>
</organism>
<reference key="1">
    <citation type="journal article" date="2011" name="MBio">
        <title>Novel metabolic attributes of the genus Cyanothece, comprising a group of unicellular nitrogen-fixing Cyanobacteria.</title>
        <authorList>
            <person name="Bandyopadhyay A."/>
            <person name="Elvitigala T."/>
            <person name="Welsh E."/>
            <person name="Stockel J."/>
            <person name="Liberton M."/>
            <person name="Min H."/>
            <person name="Sherman L.A."/>
            <person name="Pakrasi H.B."/>
        </authorList>
    </citation>
    <scope>NUCLEOTIDE SEQUENCE [LARGE SCALE GENOMIC DNA]</scope>
    <source>
        <strain>PCC 7425 / ATCC 29141</strain>
    </source>
</reference>
<name>TSAD_CYAP4</name>
<evidence type="ECO:0000255" key="1">
    <source>
        <dbReference type="HAMAP-Rule" id="MF_01445"/>
    </source>
</evidence>
<proteinExistence type="inferred from homology"/>
<accession>B8HVK5</accession>
<dbReference type="EC" id="2.3.1.234" evidence="1"/>
<dbReference type="EMBL" id="CP001344">
    <property type="protein sequence ID" value="ACL46317.1"/>
    <property type="molecule type" value="Genomic_DNA"/>
</dbReference>
<dbReference type="SMR" id="B8HVK5"/>
<dbReference type="STRING" id="395961.Cyan7425_4003"/>
<dbReference type="KEGG" id="cyn:Cyan7425_4003"/>
<dbReference type="eggNOG" id="COG0533">
    <property type="taxonomic scope" value="Bacteria"/>
</dbReference>
<dbReference type="HOGENOM" id="CLU_023208_0_2_3"/>
<dbReference type="OrthoDB" id="9806197at2"/>
<dbReference type="GO" id="GO:0005737">
    <property type="term" value="C:cytoplasm"/>
    <property type="evidence" value="ECO:0007669"/>
    <property type="project" value="UniProtKB-SubCell"/>
</dbReference>
<dbReference type="GO" id="GO:0005506">
    <property type="term" value="F:iron ion binding"/>
    <property type="evidence" value="ECO:0007669"/>
    <property type="project" value="UniProtKB-UniRule"/>
</dbReference>
<dbReference type="GO" id="GO:0061711">
    <property type="term" value="F:N(6)-L-threonylcarbamoyladenine synthase activity"/>
    <property type="evidence" value="ECO:0007669"/>
    <property type="project" value="UniProtKB-EC"/>
</dbReference>
<dbReference type="GO" id="GO:0002949">
    <property type="term" value="P:tRNA threonylcarbamoyladenosine modification"/>
    <property type="evidence" value="ECO:0007669"/>
    <property type="project" value="UniProtKB-UniRule"/>
</dbReference>
<dbReference type="CDD" id="cd24133">
    <property type="entry name" value="ASKHA_NBD_TsaD_bac"/>
    <property type="match status" value="1"/>
</dbReference>
<dbReference type="FunFam" id="3.30.420.40:FF:000012">
    <property type="entry name" value="tRNA N6-adenosine threonylcarbamoyltransferase"/>
    <property type="match status" value="1"/>
</dbReference>
<dbReference type="FunFam" id="3.30.420.40:FF:000040">
    <property type="entry name" value="tRNA N6-adenosine threonylcarbamoyltransferase"/>
    <property type="match status" value="1"/>
</dbReference>
<dbReference type="Gene3D" id="3.30.420.40">
    <property type="match status" value="2"/>
</dbReference>
<dbReference type="HAMAP" id="MF_01445">
    <property type="entry name" value="TsaD"/>
    <property type="match status" value="1"/>
</dbReference>
<dbReference type="InterPro" id="IPR043129">
    <property type="entry name" value="ATPase_NBD"/>
</dbReference>
<dbReference type="InterPro" id="IPR000905">
    <property type="entry name" value="Gcp-like_dom"/>
</dbReference>
<dbReference type="InterPro" id="IPR017861">
    <property type="entry name" value="KAE1/TsaD"/>
</dbReference>
<dbReference type="InterPro" id="IPR017860">
    <property type="entry name" value="Peptidase_M22_CS"/>
</dbReference>
<dbReference type="InterPro" id="IPR022450">
    <property type="entry name" value="TsaD"/>
</dbReference>
<dbReference type="NCBIfam" id="TIGR00329">
    <property type="entry name" value="gcp_kae1"/>
    <property type="match status" value="1"/>
</dbReference>
<dbReference type="NCBIfam" id="TIGR03723">
    <property type="entry name" value="T6A_TsaD_YgjD"/>
    <property type="match status" value="1"/>
</dbReference>
<dbReference type="PANTHER" id="PTHR11735">
    <property type="entry name" value="TRNA N6-ADENOSINE THREONYLCARBAMOYLTRANSFERASE"/>
    <property type="match status" value="1"/>
</dbReference>
<dbReference type="PANTHER" id="PTHR11735:SF6">
    <property type="entry name" value="TRNA N6-ADENOSINE THREONYLCARBAMOYLTRANSFERASE, MITOCHONDRIAL"/>
    <property type="match status" value="1"/>
</dbReference>
<dbReference type="Pfam" id="PF00814">
    <property type="entry name" value="TsaD"/>
    <property type="match status" value="1"/>
</dbReference>
<dbReference type="PRINTS" id="PR00789">
    <property type="entry name" value="OSIALOPTASE"/>
</dbReference>
<dbReference type="SUPFAM" id="SSF53067">
    <property type="entry name" value="Actin-like ATPase domain"/>
    <property type="match status" value="2"/>
</dbReference>
<dbReference type="PROSITE" id="PS01016">
    <property type="entry name" value="GLYCOPROTEASE"/>
    <property type="match status" value="1"/>
</dbReference>
<protein>
    <recommendedName>
        <fullName evidence="1">tRNA N6-adenosine threonylcarbamoyltransferase</fullName>
        <ecNumber evidence="1">2.3.1.234</ecNumber>
    </recommendedName>
    <alternativeName>
        <fullName evidence="1">N6-L-threonylcarbamoyladenine synthase</fullName>
        <shortName evidence="1">t(6)A synthase</shortName>
    </alternativeName>
    <alternativeName>
        <fullName evidence="1">t(6)A37 threonylcarbamoyladenosine biosynthesis protein TsaD</fullName>
    </alternativeName>
    <alternativeName>
        <fullName evidence="1">tRNA threonylcarbamoyladenosine biosynthesis protein TsaD</fullName>
    </alternativeName>
</protein>
<gene>
    <name evidence="1" type="primary">tsaD</name>
    <name type="synonym">gcp</name>
    <name type="ordered locus">Cyan7425_4003</name>
</gene>
<keyword id="KW-0012">Acyltransferase</keyword>
<keyword id="KW-0963">Cytoplasm</keyword>
<keyword id="KW-0408">Iron</keyword>
<keyword id="KW-0479">Metal-binding</keyword>
<keyword id="KW-0808">Transferase</keyword>
<keyword id="KW-0819">tRNA processing</keyword>
<feature type="chain" id="PRO_1000184961" description="tRNA N6-adenosine threonylcarbamoyltransferase">
    <location>
        <begin position="1"/>
        <end position="345"/>
    </location>
</feature>
<feature type="binding site" evidence="1">
    <location>
        <position position="111"/>
    </location>
    <ligand>
        <name>Fe cation</name>
        <dbReference type="ChEBI" id="CHEBI:24875"/>
    </ligand>
</feature>
<feature type="binding site" evidence="1">
    <location>
        <position position="115"/>
    </location>
    <ligand>
        <name>Fe cation</name>
        <dbReference type="ChEBI" id="CHEBI:24875"/>
    </ligand>
</feature>
<feature type="binding site" evidence="1">
    <location>
        <begin position="134"/>
        <end position="138"/>
    </location>
    <ligand>
        <name>substrate</name>
    </ligand>
</feature>
<feature type="binding site" evidence="1">
    <location>
        <position position="167"/>
    </location>
    <ligand>
        <name>substrate</name>
    </ligand>
</feature>
<feature type="binding site" evidence="1">
    <location>
        <position position="180"/>
    </location>
    <ligand>
        <name>substrate</name>
    </ligand>
</feature>
<feature type="binding site" evidence="1">
    <location>
        <position position="184"/>
    </location>
    <ligand>
        <name>substrate</name>
    </ligand>
</feature>
<feature type="binding site" evidence="1">
    <location>
        <position position="278"/>
    </location>
    <ligand>
        <name>substrate</name>
    </ligand>
</feature>
<feature type="binding site" evidence="1">
    <location>
        <position position="306"/>
    </location>
    <ligand>
        <name>Fe cation</name>
        <dbReference type="ChEBI" id="CHEBI:24875"/>
    </ligand>
</feature>
<sequence>MTTVLAIETSCDETAAAVVKNRHIYSNVIASQIAAHRPYGGVVPEVASRQHLENINAVIDEALAVAGLGWAEIDAIAATCAPGLVGSLLIGLTAAKTLALVHQKPFLGIHHLEGHIAASYLAHPDLHPPFLCLLVSGGHTSLIYVKDIGDYETLGQTRDDAAGEAFDKVARLLGLGYPGGPVIDRLASQGNPAAFHLPEGNISLPGGGYHPYDSSFSGLKTAVLRLVEKLKTEGDLPIADLAASFQDCVARSLTRRTIACALDYSLETIAIGGGVAANRGLRSHLQAAAAAHNLRVLFPPLSLCTDNAAMIACAAAAHLERGHTSPLTLGGQSRLAITEVMQLYQ</sequence>